<comment type="function">
    <text evidence="1">Responsible for synthesis of pseudouridine from uracil-13 in transfer RNAs.</text>
</comment>
<comment type="catalytic activity">
    <reaction evidence="1">
        <text>uridine(13) in tRNA = pseudouridine(13) in tRNA</text>
        <dbReference type="Rhea" id="RHEA:42540"/>
        <dbReference type="Rhea" id="RHEA-COMP:10105"/>
        <dbReference type="Rhea" id="RHEA-COMP:10106"/>
        <dbReference type="ChEBI" id="CHEBI:65314"/>
        <dbReference type="ChEBI" id="CHEBI:65315"/>
        <dbReference type="EC" id="5.4.99.27"/>
    </reaction>
</comment>
<comment type="similarity">
    <text evidence="1">Belongs to the pseudouridine synthase TruD family.</text>
</comment>
<organism>
    <name type="scientific">Xanthomonas axonopodis pv. citri (strain 306)</name>
    <dbReference type="NCBI Taxonomy" id="190486"/>
    <lineage>
        <taxon>Bacteria</taxon>
        <taxon>Pseudomonadati</taxon>
        <taxon>Pseudomonadota</taxon>
        <taxon>Gammaproteobacteria</taxon>
        <taxon>Lysobacterales</taxon>
        <taxon>Lysobacteraceae</taxon>
        <taxon>Xanthomonas</taxon>
    </lineage>
</organism>
<protein>
    <recommendedName>
        <fullName evidence="1">tRNA pseudouridine synthase D</fullName>
        <ecNumber evidence="1">5.4.99.27</ecNumber>
    </recommendedName>
    <alternativeName>
        <fullName evidence="1">tRNA pseudouridine(13) synthase</fullName>
    </alternativeName>
    <alternativeName>
        <fullName evidence="1">tRNA pseudouridylate synthase D</fullName>
    </alternativeName>
    <alternativeName>
        <fullName evidence="1">tRNA-uridine isomerase D</fullName>
    </alternativeName>
</protein>
<sequence>MSETSLLPRAHGAAVLSAAMRSTPDDFQVDELPAFEPSGEGEHLLLTVRKRGQNTAYIAKKLAHWAGIAEMGVSYAGLKDRHAVTTQRFSVHLPRRIAPDIAALDDTQMQVVESSWHNRKLQRGALHGNRFVLTLRQVQGERDAIEQRLQAIAARGIPNWFGEQRFGRDGGNVAAALAMFGHVQADDGTLLPAPTSRRRLRHDQRSMLLSAARSALFNRVLGARVAQGSWDGALEGEAWMLDGSRSVFGPEPWSEALAERLARFDIHPSGPLWGAGQLRSTDQAAAVEQGALSDPPSIALRQGLEAAGLKQERRALRLRPHGLEYQWLEPQTLQLAFALPPGCYATAVLWELGDVADAGRFNVDVRADA</sequence>
<dbReference type="EC" id="5.4.99.27" evidence="1"/>
<dbReference type="EMBL" id="AE008923">
    <property type="protein sequence ID" value="AAM36590.1"/>
    <property type="molecule type" value="Genomic_DNA"/>
</dbReference>
<dbReference type="RefSeq" id="WP_011051108.1">
    <property type="nucleotide sequence ID" value="NC_003919.1"/>
</dbReference>
<dbReference type="SMR" id="Q8PLR6"/>
<dbReference type="GeneID" id="66910873"/>
<dbReference type="KEGG" id="xac:XAC1723"/>
<dbReference type="eggNOG" id="COG0585">
    <property type="taxonomic scope" value="Bacteria"/>
</dbReference>
<dbReference type="HOGENOM" id="CLU_005281_4_0_6"/>
<dbReference type="Proteomes" id="UP000000576">
    <property type="component" value="Chromosome"/>
</dbReference>
<dbReference type="GO" id="GO:0005829">
    <property type="term" value="C:cytosol"/>
    <property type="evidence" value="ECO:0007669"/>
    <property type="project" value="TreeGrafter"/>
</dbReference>
<dbReference type="GO" id="GO:0003723">
    <property type="term" value="F:RNA binding"/>
    <property type="evidence" value="ECO:0007669"/>
    <property type="project" value="InterPro"/>
</dbReference>
<dbReference type="GO" id="GO:0160150">
    <property type="term" value="F:tRNA pseudouridine(13) synthase activity"/>
    <property type="evidence" value="ECO:0007669"/>
    <property type="project" value="UniProtKB-EC"/>
</dbReference>
<dbReference type="GO" id="GO:0031119">
    <property type="term" value="P:tRNA pseudouridine synthesis"/>
    <property type="evidence" value="ECO:0007669"/>
    <property type="project" value="UniProtKB-UniRule"/>
</dbReference>
<dbReference type="CDD" id="cd02575">
    <property type="entry name" value="PseudoU_synth_EcTruD"/>
    <property type="match status" value="1"/>
</dbReference>
<dbReference type="Gene3D" id="3.30.2350.20">
    <property type="entry name" value="TruD, catalytic domain"/>
    <property type="match status" value="1"/>
</dbReference>
<dbReference type="Gene3D" id="3.30.2340.10">
    <property type="entry name" value="TruD, insertion domain"/>
    <property type="match status" value="1"/>
</dbReference>
<dbReference type="HAMAP" id="MF_01082">
    <property type="entry name" value="TruD"/>
    <property type="match status" value="1"/>
</dbReference>
<dbReference type="InterPro" id="IPR020103">
    <property type="entry name" value="PsdUridine_synth_cat_dom_sf"/>
</dbReference>
<dbReference type="InterPro" id="IPR001656">
    <property type="entry name" value="PsdUridine_synth_TruD"/>
</dbReference>
<dbReference type="InterPro" id="IPR020119">
    <property type="entry name" value="PsdUridine_synth_TruD_CS"/>
</dbReference>
<dbReference type="InterPro" id="IPR011760">
    <property type="entry name" value="PsdUridine_synth_TruD_insert"/>
</dbReference>
<dbReference type="InterPro" id="IPR042214">
    <property type="entry name" value="TruD_catalytic"/>
</dbReference>
<dbReference type="InterPro" id="IPR043165">
    <property type="entry name" value="TruD_insert_sf"/>
</dbReference>
<dbReference type="InterPro" id="IPR050170">
    <property type="entry name" value="TruD_pseudoU_synthase"/>
</dbReference>
<dbReference type="NCBIfam" id="NF002153">
    <property type="entry name" value="PRK00984.1-2"/>
    <property type="match status" value="1"/>
</dbReference>
<dbReference type="PANTHER" id="PTHR47811">
    <property type="entry name" value="TRNA PSEUDOURIDINE SYNTHASE D"/>
    <property type="match status" value="1"/>
</dbReference>
<dbReference type="PANTHER" id="PTHR47811:SF1">
    <property type="entry name" value="TRNA PSEUDOURIDINE SYNTHASE D"/>
    <property type="match status" value="1"/>
</dbReference>
<dbReference type="Pfam" id="PF01142">
    <property type="entry name" value="TruD"/>
    <property type="match status" value="2"/>
</dbReference>
<dbReference type="SUPFAM" id="SSF55120">
    <property type="entry name" value="Pseudouridine synthase"/>
    <property type="match status" value="1"/>
</dbReference>
<dbReference type="PROSITE" id="PS50984">
    <property type="entry name" value="TRUD"/>
    <property type="match status" value="1"/>
</dbReference>
<dbReference type="PROSITE" id="PS01268">
    <property type="entry name" value="UPF0024"/>
    <property type="match status" value="1"/>
</dbReference>
<name>TRUD_XANAC</name>
<keyword id="KW-0413">Isomerase</keyword>
<keyword id="KW-0819">tRNA processing</keyword>
<reference key="1">
    <citation type="journal article" date="2002" name="Nature">
        <title>Comparison of the genomes of two Xanthomonas pathogens with differing host specificities.</title>
        <authorList>
            <person name="da Silva A.C.R."/>
            <person name="Ferro J.A."/>
            <person name="Reinach F.C."/>
            <person name="Farah C.S."/>
            <person name="Furlan L.R."/>
            <person name="Quaggio R.B."/>
            <person name="Monteiro-Vitorello C.B."/>
            <person name="Van Sluys M.A."/>
            <person name="Almeida N.F. Jr."/>
            <person name="Alves L.M.C."/>
            <person name="do Amaral A.M."/>
            <person name="Bertolini M.C."/>
            <person name="Camargo L.E.A."/>
            <person name="Camarotte G."/>
            <person name="Cannavan F."/>
            <person name="Cardozo J."/>
            <person name="Chambergo F."/>
            <person name="Ciapina L.P."/>
            <person name="Cicarelli R.M.B."/>
            <person name="Coutinho L.L."/>
            <person name="Cursino-Santos J.R."/>
            <person name="El-Dorry H."/>
            <person name="Faria J.B."/>
            <person name="Ferreira A.J.S."/>
            <person name="Ferreira R.C.C."/>
            <person name="Ferro M.I.T."/>
            <person name="Formighieri E.F."/>
            <person name="Franco M.C."/>
            <person name="Greggio C.C."/>
            <person name="Gruber A."/>
            <person name="Katsuyama A.M."/>
            <person name="Kishi L.T."/>
            <person name="Leite R.P."/>
            <person name="Lemos E.G.M."/>
            <person name="Lemos M.V.F."/>
            <person name="Locali E.C."/>
            <person name="Machado M.A."/>
            <person name="Madeira A.M.B.N."/>
            <person name="Martinez-Rossi N.M."/>
            <person name="Martins E.C."/>
            <person name="Meidanis J."/>
            <person name="Menck C.F.M."/>
            <person name="Miyaki C.Y."/>
            <person name="Moon D.H."/>
            <person name="Moreira L.M."/>
            <person name="Novo M.T.M."/>
            <person name="Okura V.K."/>
            <person name="Oliveira M.C."/>
            <person name="Oliveira V.R."/>
            <person name="Pereira H.A."/>
            <person name="Rossi A."/>
            <person name="Sena J.A.D."/>
            <person name="Silva C."/>
            <person name="de Souza R.F."/>
            <person name="Spinola L.A.F."/>
            <person name="Takita M.A."/>
            <person name="Tamura R.E."/>
            <person name="Teixeira E.C."/>
            <person name="Tezza R.I.D."/>
            <person name="Trindade dos Santos M."/>
            <person name="Truffi D."/>
            <person name="Tsai S.M."/>
            <person name="White F.F."/>
            <person name="Setubal J.C."/>
            <person name="Kitajima J.P."/>
        </authorList>
    </citation>
    <scope>NUCLEOTIDE SEQUENCE [LARGE SCALE GENOMIC DNA]</scope>
    <source>
        <strain>306</strain>
    </source>
</reference>
<evidence type="ECO:0000255" key="1">
    <source>
        <dbReference type="HAMAP-Rule" id="MF_01082"/>
    </source>
</evidence>
<gene>
    <name evidence="1" type="primary">truD</name>
    <name type="ordered locus">XAC1723</name>
</gene>
<accession>Q8PLR6</accession>
<proteinExistence type="inferred from homology"/>
<feature type="chain" id="PRO_0000152531" description="tRNA pseudouridine synthase D">
    <location>
        <begin position="1"/>
        <end position="369"/>
    </location>
</feature>
<feature type="domain" description="TRUD" evidence="1">
    <location>
        <begin position="156"/>
        <end position="318"/>
    </location>
</feature>
<feature type="active site" description="Nucleophile" evidence="1">
    <location>
        <position position="80"/>
    </location>
</feature>